<reference key="1">
    <citation type="journal article" date="2006" name="J. Bacteriol.">
        <title>The genome of the obligately intracellular bacterium Ehrlichia canis reveals themes of complex membrane structure and immune evasion strategies.</title>
        <authorList>
            <person name="Mavromatis K."/>
            <person name="Doyle C.K."/>
            <person name="Lykidis A."/>
            <person name="Ivanova N."/>
            <person name="Francino M.P."/>
            <person name="Chain P."/>
            <person name="Shin M."/>
            <person name="Malfatti S."/>
            <person name="Larimer F."/>
            <person name="Copeland A."/>
            <person name="Detter J.C."/>
            <person name="Land M."/>
            <person name="Richardson P.M."/>
            <person name="Yu X.J."/>
            <person name="Walker D.H."/>
            <person name="McBride J.W."/>
            <person name="Kyrpides N.C."/>
        </authorList>
    </citation>
    <scope>NUCLEOTIDE SEQUENCE [LARGE SCALE GENOMIC DNA]</scope>
    <source>
        <strain>Jake</strain>
    </source>
</reference>
<protein>
    <recommendedName>
        <fullName evidence="1">Protein-export protein SecB</fullName>
    </recommendedName>
</protein>
<feature type="chain" id="PRO_0000055366" description="Protein-export protein SecB">
    <location>
        <begin position="1"/>
        <end position="177"/>
    </location>
</feature>
<dbReference type="EMBL" id="CP000107">
    <property type="protein sequence ID" value="AAZ68808.1"/>
    <property type="molecule type" value="Genomic_DNA"/>
</dbReference>
<dbReference type="RefSeq" id="WP_011304885.1">
    <property type="nucleotide sequence ID" value="NC_007354.1"/>
</dbReference>
<dbReference type="SMR" id="Q3YR47"/>
<dbReference type="FunCoup" id="Q3YR47">
    <property type="interactions" value="115"/>
</dbReference>
<dbReference type="STRING" id="269484.Ecaj_0777"/>
<dbReference type="KEGG" id="ecn:Ecaj_0777"/>
<dbReference type="eggNOG" id="COG1952">
    <property type="taxonomic scope" value="Bacteria"/>
</dbReference>
<dbReference type="HOGENOM" id="CLU_111574_1_0_5"/>
<dbReference type="InParanoid" id="Q3YR47"/>
<dbReference type="Proteomes" id="UP000000435">
    <property type="component" value="Chromosome"/>
</dbReference>
<dbReference type="GO" id="GO:0005737">
    <property type="term" value="C:cytoplasm"/>
    <property type="evidence" value="ECO:0007669"/>
    <property type="project" value="UniProtKB-SubCell"/>
</dbReference>
<dbReference type="GO" id="GO:0051082">
    <property type="term" value="F:unfolded protein binding"/>
    <property type="evidence" value="ECO:0007669"/>
    <property type="project" value="InterPro"/>
</dbReference>
<dbReference type="GO" id="GO:0006457">
    <property type="term" value="P:protein folding"/>
    <property type="evidence" value="ECO:0007669"/>
    <property type="project" value="UniProtKB-UniRule"/>
</dbReference>
<dbReference type="GO" id="GO:0051262">
    <property type="term" value="P:protein tetramerization"/>
    <property type="evidence" value="ECO:0007669"/>
    <property type="project" value="InterPro"/>
</dbReference>
<dbReference type="GO" id="GO:0015031">
    <property type="term" value="P:protein transport"/>
    <property type="evidence" value="ECO:0007669"/>
    <property type="project" value="UniProtKB-UniRule"/>
</dbReference>
<dbReference type="Gene3D" id="3.10.420.10">
    <property type="entry name" value="SecB-like"/>
    <property type="match status" value="1"/>
</dbReference>
<dbReference type="HAMAP" id="MF_00821">
    <property type="entry name" value="SecB"/>
    <property type="match status" value="1"/>
</dbReference>
<dbReference type="InterPro" id="IPR003708">
    <property type="entry name" value="SecB"/>
</dbReference>
<dbReference type="InterPro" id="IPR035958">
    <property type="entry name" value="SecB-like_sf"/>
</dbReference>
<dbReference type="NCBIfam" id="NF004392">
    <property type="entry name" value="PRK05751.1-3"/>
    <property type="match status" value="1"/>
</dbReference>
<dbReference type="NCBIfam" id="TIGR00809">
    <property type="entry name" value="secB"/>
    <property type="match status" value="1"/>
</dbReference>
<dbReference type="PANTHER" id="PTHR36918">
    <property type="match status" value="1"/>
</dbReference>
<dbReference type="PANTHER" id="PTHR36918:SF1">
    <property type="entry name" value="PROTEIN-EXPORT PROTEIN SECB"/>
    <property type="match status" value="1"/>
</dbReference>
<dbReference type="Pfam" id="PF02556">
    <property type="entry name" value="SecB"/>
    <property type="match status" value="1"/>
</dbReference>
<dbReference type="SUPFAM" id="SSF54611">
    <property type="entry name" value="SecB-like"/>
    <property type="match status" value="1"/>
</dbReference>
<accession>Q3YR47</accession>
<keyword id="KW-0143">Chaperone</keyword>
<keyword id="KW-0963">Cytoplasm</keyword>
<keyword id="KW-0653">Protein transport</keyword>
<keyword id="KW-0811">Translocation</keyword>
<keyword id="KW-0813">Transport</keyword>
<comment type="function">
    <text evidence="1">One of the proteins required for the normal export of preproteins out of the cell cytoplasm. It is a molecular chaperone that binds to a subset of precursor proteins, maintaining them in a translocation-competent state. It also specifically binds to its receptor SecA.</text>
</comment>
<comment type="subunit">
    <text evidence="1">Homotetramer, a dimer of dimers. One homotetramer interacts with 1 SecA dimer.</text>
</comment>
<comment type="subcellular location">
    <subcellularLocation>
        <location evidence="1">Cytoplasm</location>
    </subcellularLocation>
</comment>
<comment type="similarity">
    <text evidence="1">Belongs to the SecB family.</text>
</comment>
<name>SECB_EHRCJ</name>
<gene>
    <name evidence="1" type="primary">secB</name>
    <name type="ordered locus">Ecaj_0777</name>
</gene>
<organism>
    <name type="scientific">Ehrlichia canis (strain Jake)</name>
    <dbReference type="NCBI Taxonomy" id="269484"/>
    <lineage>
        <taxon>Bacteria</taxon>
        <taxon>Pseudomonadati</taxon>
        <taxon>Pseudomonadota</taxon>
        <taxon>Alphaproteobacteria</taxon>
        <taxon>Rickettsiales</taxon>
        <taxon>Anaplasmataceae</taxon>
        <taxon>Ehrlichia</taxon>
    </lineage>
</organism>
<evidence type="ECO:0000255" key="1">
    <source>
        <dbReference type="HAMAP-Rule" id="MF_00821"/>
    </source>
</evidence>
<sequence>MSYKLKVKGQYIKDLSFENQNSPQIFVMISKTPPEINISVNVSSVSLPVKAQDQENGQSLDNKVEPLYEVTLQVNAEARVGTTVAFICEVKYCGVFSVENSDASNGEELSQQDMRDMLLISAPSILFPFVRELISRITATGGFPPLMLDVVDFKAMYESQIKQNAAEQNDNGQHTEK</sequence>
<proteinExistence type="inferred from homology"/>